<organism>
    <name type="scientific">Actinobacillus pleuropneumoniae serotype 7 (strain AP76)</name>
    <dbReference type="NCBI Taxonomy" id="537457"/>
    <lineage>
        <taxon>Bacteria</taxon>
        <taxon>Pseudomonadati</taxon>
        <taxon>Pseudomonadota</taxon>
        <taxon>Gammaproteobacteria</taxon>
        <taxon>Pasteurellales</taxon>
        <taxon>Pasteurellaceae</taxon>
        <taxon>Actinobacillus</taxon>
    </lineage>
</organism>
<proteinExistence type="inferred from homology"/>
<sequence length="330" mass="37421">MKKTFILQQQEISFVKNTFTQYLIDKLGIIEVQGPILSQVGNGMQDNLSGIEKAVQVNVKCIPGATFEVVHSLAKWKRHTLARFGFKEGEGLFVHMKALRPDEDSLDPTHSVYVDQWDWEKVIPEGRRNFDFLKETVNEIYKAIRLTELAVEARFDIPSILPKQITFVHSEELVQRYPNMTGKERENAICKEHGAVFLIGIGGKLSDGKPHDGRAPDYDDWTTESENGYKGLNGDILVWNEQLGTAFELSSMGIRVDEKALRLQVELTGDQDRLEMDWHKDLLAGRLPLSIGGGIGQSRLVMFLLRKAHIGEVQSSVWPKAMLEKYKNIL</sequence>
<dbReference type="EC" id="6.3.1.1" evidence="1"/>
<dbReference type="EMBL" id="CP001091">
    <property type="protein sequence ID" value="ACE62576.1"/>
    <property type="molecule type" value="Genomic_DNA"/>
</dbReference>
<dbReference type="RefSeq" id="WP_005602692.1">
    <property type="nucleotide sequence ID" value="NC_010939.1"/>
</dbReference>
<dbReference type="SMR" id="B3GZ90"/>
<dbReference type="KEGG" id="apa:APP7_1924"/>
<dbReference type="HOGENOM" id="CLU_071543_0_0_6"/>
<dbReference type="UniPathway" id="UPA00134">
    <property type="reaction ID" value="UER00194"/>
</dbReference>
<dbReference type="Proteomes" id="UP000001226">
    <property type="component" value="Chromosome"/>
</dbReference>
<dbReference type="GO" id="GO:0005829">
    <property type="term" value="C:cytosol"/>
    <property type="evidence" value="ECO:0007669"/>
    <property type="project" value="TreeGrafter"/>
</dbReference>
<dbReference type="GO" id="GO:0004071">
    <property type="term" value="F:aspartate-ammonia ligase activity"/>
    <property type="evidence" value="ECO:0007669"/>
    <property type="project" value="UniProtKB-UniRule"/>
</dbReference>
<dbReference type="GO" id="GO:0005524">
    <property type="term" value="F:ATP binding"/>
    <property type="evidence" value="ECO:0007669"/>
    <property type="project" value="UniProtKB-UniRule"/>
</dbReference>
<dbReference type="GO" id="GO:0070981">
    <property type="term" value="P:L-asparagine biosynthetic process"/>
    <property type="evidence" value="ECO:0007669"/>
    <property type="project" value="UniProtKB-UniRule"/>
</dbReference>
<dbReference type="CDD" id="cd00645">
    <property type="entry name" value="AsnA"/>
    <property type="match status" value="1"/>
</dbReference>
<dbReference type="Gene3D" id="3.30.930.10">
    <property type="entry name" value="Bira Bifunctional Protein, Domain 2"/>
    <property type="match status" value="1"/>
</dbReference>
<dbReference type="HAMAP" id="MF_00555">
    <property type="entry name" value="AsnA"/>
    <property type="match status" value="1"/>
</dbReference>
<dbReference type="InterPro" id="IPR006195">
    <property type="entry name" value="aa-tRNA-synth_II"/>
</dbReference>
<dbReference type="InterPro" id="IPR045864">
    <property type="entry name" value="aa-tRNA-synth_II/BPL/LPL"/>
</dbReference>
<dbReference type="InterPro" id="IPR004618">
    <property type="entry name" value="AsnA"/>
</dbReference>
<dbReference type="NCBIfam" id="TIGR00669">
    <property type="entry name" value="asnA"/>
    <property type="match status" value="1"/>
</dbReference>
<dbReference type="PANTHER" id="PTHR30073">
    <property type="entry name" value="ASPARTATE--AMMONIA LIGASE"/>
    <property type="match status" value="1"/>
</dbReference>
<dbReference type="PANTHER" id="PTHR30073:SF5">
    <property type="entry name" value="ASPARTATE--AMMONIA LIGASE"/>
    <property type="match status" value="1"/>
</dbReference>
<dbReference type="Pfam" id="PF03590">
    <property type="entry name" value="AsnA"/>
    <property type="match status" value="1"/>
</dbReference>
<dbReference type="PIRSF" id="PIRSF001555">
    <property type="entry name" value="Asp_ammon_ligase"/>
    <property type="match status" value="1"/>
</dbReference>
<dbReference type="SUPFAM" id="SSF55681">
    <property type="entry name" value="Class II aaRS and biotin synthetases"/>
    <property type="match status" value="1"/>
</dbReference>
<dbReference type="PROSITE" id="PS50862">
    <property type="entry name" value="AA_TRNA_LIGASE_II"/>
    <property type="match status" value="1"/>
</dbReference>
<protein>
    <recommendedName>
        <fullName evidence="1">Aspartate--ammonia ligase</fullName>
        <ecNumber evidence="1">6.3.1.1</ecNumber>
    </recommendedName>
    <alternativeName>
        <fullName evidence="1">Asparagine synthetase A</fullName>
    </alternativeName>
</protein>
<feature type="chain" id="PRO_1000129104" description="Aspartate--ammonia ligase">
    <location>
        <begin position="1"/>
        <end position="330"/>
    </location>
</feature>
<reference key="1">
    <citation type="submission" date="2008-06" db="EMBL/GenBank/DDBJ databases">
        <title>Genome and proteome analysis of A. pleuropneumoniae serotype 7.</title>
        <authorList>
            <person name="Linke B."/>
            <person name="Buettner F."/>
            <person name="Martinez-Arias R."/>
            <person name="Goesmann A."/>
            <person name="Baltes N."/>
            <person name="Tegetmeyer H."/>
            <person name="Singh M."/>
            <person name="Gerlach G.F."/>
        </authorList>
    </citation>
    <scope>NUCLEOTIDE SEQUENCE [LARGE SCALE GENOMIC DNA]</scope>
    <source>
        <strain>AP76</strain>
    </source>
</reference>
<name>ASNA_ACTP7</name>
<accession>B3GZ90</accession>
<gene>
    <name evidence="1" type="primary">asnA</name>
    <name type="ordered locus">APP7_1924</name>
</gene>
<keyword id="KW-0028">Amino-acid biosynthesis</keyword>
<keyword id="KW-0061">Asparagine biosynthesis</keyword>
<keyword id="KW-0067">ATP-binding</keyword>
<keyword id="KW-0963">Cytoplasm</keyword>
<keyword id="KW-0436">Ligase</keyword>
<keyword id="KW-0547">Nucleotide-binding</keyword>
<comment type="catalytic activity">
    <reaction evidence="1">
        <text>L-aspartate + NH4(+) + ATP = L-asparagine + AMP + diphosphate + H(+)</text>
        <dbReference type="Rhea" id="RHEA:11372"/>
        <dbReference type="ChEBI" id="CHEBI:15378"/>
        <dbReference type="ChEBI" id="CHEBI:28938"/>
        <dbReference type="ChEBI" id="CHEBI:29991"/>
        <dbReference type="ChEBI" id="CHEBI:30616"/>
        <dbReference type="ChEBI" id="CHEBI:33019"/>
        <dbReference type="ChEBI" id="CHEBI:58048"/>
        <dbReference type="ChEBI" id="CHEBI:456215"/>
        <dbReference type="EC" id="6.3.1.1"/>
    </reaction>
</comment>
<comment type="pathway">
    <text evidence="1">Amino-acid biosynthesis; L-asparagine biosynthesis; L-asparagine from L-aspartate (ammonia route): step 1/1.</text>
</comment>
<comment type="subcellular location">
    <subcellularLocation>
        <location evidence="1">Cytoplasm</location>
    </subcellularLocation>
</comment>
<comment type="similarity">
    <text evidence="1">Belongs to the class-II aminoacyl-tRNA synthetase family. AsnA subfamily.</text>
</comment>
<evidence type="ECO:0000255" key="1">
    <source>
        <dbReference type="HAMAP-Rule" id="MF_00555"/>
    </source>
</evidence>